<proteinExistence type="evidence at protein level"/>
<feature type="chain" id="PRO_0000443290" description="EEF1A lysine methyltransferase 4">
    <location>
        <begin position="1"/>
        <end position="255"/>
    </location>
</feature>
<feature type="short sequence motif" description="Required for methyltransferase activity">
    <location>
        <begin position="129"/>
        <end position="134"/>
    </location>
</feature>
<feature type="binding site" evidence="2 7">
    <location>
        <position position="26"/>
    </location>
    <ligand>
        <name>S-adenosyl-L-methionine</name>
        <dbReference type="ChEBI" id="CHEBI:59789"/>
    </ligand>
</feature>
<feature type="binding site" evidence="2 7">
    <location>
        <position position="30"/>
    </location>
    <ligand>
        <name>S-adenosyl-L-methionine</name>
        <dbReference type="ChEBI" id="CHEBI:59789"/>
    </ligand>
</feature>
<feature type="binding site" evidence="2 7">
    <location>
        <position position="41"/>
    </location>
    <ligand>
        <name>S-adenosyl-L-methionine</name>
        <dbReference type="ChEBI" id="CHEBI:59789"/>
    </ligand>
</feature>
<feature type="binding site" evidence="2 7">
    <location>
        <position position="66"/>
    </location>
    <ligand>
        <name>S-adenosyl-L-methionine</name>
        <dbReference type="ChEBI" id="CHEBI:59789"/>
    </ligand>
</feature>
<feature type="binding site" evidence="2 7">
    <location>
        <begin position="88"/>
        <end position="89"/>
    </location>
    <ligand>
        <name>S-adenosyl-L-methionine</name>
        <dbReference type="ChEBI" id="CHEBI:59789"/>
    </ligand>
</feature>
<feature type="binding site" evidence="2 7">
    <location>
        <begin position="113"/>
        <end position="114"/>
    </location>
    <ligand>
        <name>S-adenosyl-L-methionine</name>
        <dbReference type="ChEBI" id="CHEBI:59789"/>
    </ligand>
</feature>
<feature type="binding site" evidence="2 7">
    <location>
        <position position="130"/>
    </location>
    <ligand>
        <name>S-adenosyl-L-methionine</name>
        <dbReference type="ChEBI" id="CHEBI:59789"/>
    </ligand>
</feature>
<feature type="modified residue" description="Phosphotyrosine" evidence="8">
    <location>
        <position position="39"/>
    </location>
</feature>
<feature type="sequence variant" id="VAR_047752" description="In dbSNP:rs7633387." evidence="1 4">
    <original>H</original>
    <variation>Y</variation>
    <location>
        <position position="101"/>
    </location>
</feature>
<feature type="mutagenesis site" description="Abolishes methyltransferase activity." evidence="3">
    <original>D</original>
    <variation>A</variation>
    <location>
        <position position="88"/>
    </location>
</feature>
<feature type="mutagenesis site" description="Abolishes protein-lysine N-methyltransferase activity." evidence="3">
    <original>E</original>
    <variation>A</variation>
    <location>
        <position position="129"/>
    </location>
</feature>
<feature type="mutagenesis site" description="Abolishes protein-lysine N-methyltransferase activity." evidence="3">
    <original>K</original>
    <variation>A</variation>
    <location>
        <position position="130"/>
    </location>
</feature>
<feature type="mutagenesis site" description="Reduces protein-lysine N-methyltransferase activity." evidence="3">
    <original>T</original>
    <variation>A</variation>
    <location>
        <position position="132"/>
    </location>
</feature>
<feature type="mutagenesis site" description="Reduces protein-lysine N-methyltransferase activity." evidence="3">
    <original>L</original>
    <variation>A</variation>
    <location>
        <position position="133"/>
    </location>
</feature>
<feature type="mutagenesis site" description="Abolishes protein-lysine N-methyltransferase activity." evidence="3">
    <original>D</original>
    <variation>A</variation>
    <location>
        <position position="134"/>
    </location>
</feature>
<feature type="helix" evidence="9">
    <location>
        <begin position="19"/>
        <end position="21"/>
    </location>
</feature>
<feature type="helix" evidence="9">
    <location>
        <begin position="23"/>
        <end position="29"/>
    </location>
</feature>
<feature type="turn" evidence="9">
    <location>
        <begin position="30"/>
        <end position="35"/>
    </location>
</feature>
<feature type="helix" evidence="9">
    <location>
        <begin position="45"/>
        <end position="52"/>
    </location>
</feature>
<feature type="helix" evidence="9">
    <location>
        <begin position="53"/>
        <end position="55"/>
    </location>
</feature>
<feature type="strand" evidence="9">
    <location>
        <begin position="62"/>
        <end position="65"/>
    </location>
</feature>
<feature type="helix" evidence="9">
    <location>
        <begin position="72"/>
        <end position="78"/>
    </location>
</feature>
<feature type="strand" evidence="9">
    <location>
        <begin position="84"/>
        <end position="89"/>
    </location>
</feature>
<feature type="helix" evidence="9">
    <location>
        <begin position="91"/>
        <end position="100"/>
    </location>
</feature>
<feature type="turn" evidence="9">
    <location>
        <begin position="101"/>
        <end position="103"/>
    </location>
</feature>
<feature type="strand" evidence="9">
    <location>
        <begin position="108"/>
        <end position="111"/>
    </location>
</feature>
<feature type="strand" evidence="9">
    <location>
        <begin position="124"/>
        <end position="131"/>
    </location>
</feature>
<feature type="helix" evidence="9">
    <location>
        <begin position="132"/>
        <end position="136"/>
    </location>
</feature>
<feature type="turn" evidence="9">
    <location>
        <begin position="137"/>
        <end position="139"/>
    </location>
</feature>
<feature type="helix" evidence="9">
    <location>
        <begin position="148"/>
        <end position="164"/>
    </location>
</feature>
<feature type="strand" evidence="9">
    <location>
        <begin position="165"/>
        <end position="176"/>
    </location>
</feature>
<feature type="helix" evidence="9">
    <location>
        <begin position="179"/>
        <end position="186"/>
    </location>
</feature>
<feature type="helix" evidence="9">
    <location>
        <begin position="189"/>
        <end position="191"/>
    </location>
</feature>
<feature type="strand" evidence="9">
    <location>
        <begin position="193"/>
        <end position="201"/>
    </location>
</feature>
<feature type="helix" evidence="9">
    <location>
        <begin position="202"/>
        <end position="204"/>
    </location>
</feature>
<feature type="strand" evidence="9">
    <location>
        <begin position="206"/>
        <end position="213"/>
    </location>
</feature>
<feature type="helix" evidence="9">
    <location>
        <begin position="219"/>
        <end position="225"/>
    </location>
</feature>
<feature type="turn" evidence="9">
    <location>
        <begin position="226"/>
        <end position="228"/>
    </location>
</feature>
<protein>
    <recommendedName>
        <fullName evidence="5">EEF1A lysine methyltransferase 4</fullName>
        <ecNumber evidence="3">2.1.1.-</ecNumber>
    </recommendedName>
</protein>
<evidence type="ECO:0000269" key="1">
    <source>
    </source>
</evidence>
<evidence type="ECO:0000269" key="2">
    <source>
    </source>
</evidence>
<evidence type="ECO:0000269" key="3">
    <source>
    </source>
</evidence>
<evidence type="ECO:0000269" key="4">
    <source ref="2"/>
</evidence>
<evidence type="ECO:0000305" key="5"/>
<evidence type="ECO:0000312" key="6">
    <source>
        <dbReference type="HGNC" id="HGNC:53611"/>
    </source>
</evidence>
<evidence type="ECO:0007744" key="7">
    <source>
        <dbReference type="PDB" id="2PXX"/>
    </source>
</evidence>
<evidence type="ECO:0007744" key="8">
    <source>
    </source>
</evidence>
<evidence type="ECO:0007829" key="9">
    <source>
        <dbReference type="PDB" id="2PXX"/>
    </source>
</evidence>
<comment type="function">
    <text evidence="3">Protein-lysine methyltransferase that efficiently catalyzes three successive methylations on 'Lys-36' in eukaryotic translation elongation factor 1 alpha (EEF1A1 or EEF1A2).</text>
</comment>
<comment type="catalytic activity">
    <reaction evidence="3">
        <text>L-lysyl-[protein] + S-adenosyl-L-methionine = N(6)-methyl-L-lysyl-[protein] + S-adenosyl-L-homocysteine + H(+)</text>
        <dbReference type="Rhea" id="RHEA:51736"/>
        <dbReference type="Rhea" id="RHEA-COMP:9752"/>
        <dbReference type="Rhea" id="RHEA-COMP:13053"/>
        <dbReference type="ChEBI" id="CHEBI:15378"/>
        <dbReference type="ChEBI" id="CHEBI:29969"/>
        <dbReference type="ChEBI" id="CHEBI:57856"/>
        <dbReference type="ChEBI" id="CHEBI:59789"/>
        <dbReference type="ChEBI" id="CHEBI:61929"/>
    </reaction>
</comment>
<comment type="catalytic activity">
    <reaction evidence="3">
        <text>N(6)-methyl-L-lysyl-[protein] + S-adenosyl-L-methionine = N(6),N(6)-dimethyl-L-lysyl-[protein] + S-adenosyl-L-homocysteine + H(+)</text>
        <dbReference type="Rhea" id="RHEA:54196"/>
        <dbReference type="Rhea" id="RHEA-COMP:13053"/>
        <dbReference type="Rhea" id="RHEA-COMP:13827"/>
        <dbReference type="ChEBI" id="CHEBI:15378"/>
        <dbReference type="ChEBI" id="CHEBI:57856"/>
        <dbReference type="ChEBI" id="CHEBI:59789"/>
        <dbReference type="ChEBI" id="CHEBI:61929"/>
        <dbReference type="ChEBI" id="CHEBI:61976"/>
    </reaction>
</comment>
<comment type="catalytic activity">
    <reaction evidence="3">
        <text>N(6),N(6)-dimethyl-L-lysyl-[protein] + S-adenosyl-L-methionine = N(6),N(6),N(6)-trimethyl-L-lysyl-[protein] + S-adenosyl-L-homocysteine + H(+)</text>
        <dbReference type="Rhea" id="RHEA:54200"/>
        <dbReference type="Rhea" id="RHEA-COMP:13826"/>
        <dbReference type="Rhea" id="RHEA-COMP:13827"/>
        <dbReference type="ChEBI" id="CHEBI:15378"/>
        <dbReference type="ChEBI" id="CHEBI:57856"/>
        <dbReference type="ChEBI" id="CHEBI:59789"/>
        <dbReference type="ChEBI" id="CHEBI:61961"/>
        <dbReference type="ChEBI" id="CHEBI:61976"/>
    </reaction>
</comment>
<comment type="alternative products">
    <event type="alternative splicing"/>
    <isoform>
        <id>P0DPD7-4</id>
        <id>O60344-4</id>
        <name>EEF1AKMT4-1</name>
        <sequence type="displayed"/>
    </isoform>
    <isoform>
        <id>P0DPD8-1</id>
        <id>O60344-1</id>
        <name>EEF1AKMT4-ECE2-1</name>
        <name>ECE-2A</name>
        <sequence type="external"/>
    </isoform>
</comment>
<comment type="similarity">
    <text evidence="5">Belongs to the methyltransferase superfamily.</text>
</comment>
<organism>
    <name type="scientific">Homo sapiens</name>
    <name type="common">Human</name>
    <dbReference type="NCBI Taxonomy" id="9606"/>
    <lineage>
        <taxon>Eukaryota</taxon>
        <taxon>Metazoa</taxon>
        <taxon>Chordata</taxon>
        <taxon>Craniata</taxon>
        <taxon>Vertebrata</taxon>
        <taxon>Euteleostomi</taxon>
        <taxon>Mammalia</taxon>
        <taxon>Eutheria</taxon>
        <taxon>Euarchontoglires</taxon>
        <taxon>Primates</taxon>
        <taxon>Haplorrhini</taxon>
        <taxon>Catarrhini</taxon>
        <taxon>Hominidae</taxon>
        <taxon>Homo</taxon>
    </lineage>
</organism>
<accession>P0DPD7</accession>
<accession>A5PLK8</accession>
<accession>O60344</accession>
<accession>Q6NTG7</accession>
<accession>Q6UW36</accession>
<accession>Q8NFD7</accession>
<accession>Q96NX3</accession>
<accession>Q96NX4</accession>
<accession>Q9BRZ8</accession>
<name>EFMT4_HUMAN</name>
<gene>
    <name evidence="6" type="primary">EEF1AKMT4</name>
</gene>
<sequence length="255" mass="28306">MASPGAGRAPPELPERNCGYREVEYWDQRYQGAADSAPYDWFGDFSSFRALLEPELRPEDRILVLGCGNSALSYELFLGGFPNVTSVDYSSVVVAAMQARHAHVPQLRWETMDVRKLDFPSASFDVVLEKGTLDALLAGERDPWTVSSEGVHTVDQVLSEVSRVLVPGGRFISMTSAAPHFRTRHYAQAYYGWSLRHATYGSGFHFHLYLMHKGGKLSVAQLALGAQILSPPRPPTSPCFLQDSDHEDFLSAIQL</sequence>
<reference key="1">
    <citation type="journal article" date="2006" name="Nature">
        <title>The DNA sequence, annotation and analysis of human chromosome 3.</title>
        <authorList>
            <person name="Muzny D.M."/>
            <person name="Scherer S.E."/>
            <person name="Kaul R."/>
            <person name="Wang J."/>
            <person name="Yu J."/>
            <person name="Sudbrak R."/>
            <person name="Buhay C.J."/>
            <person name="Chen R."/>
            <person name="Cree A."/>
            <person name="Ding Y."/>
            <person name="Dugan-Rocha S."/>
            <person name="Gill R."/>
            <person name="Gunaratne P."/>
            <person name="Harris R.A."/>
            <person name="Hawes A.C."/>
            <person name="Hernandez J."/>
            <person name="Hodgson A.V."/>
            <person name="Hume J."/>
            <person name="Jackson A."/>
            <person name="Khan Z.M."/>
            <person name="Kovar-Smith C."/>
            <person name="Lewis L.R."/>
            <person name="Lozado R.J."/>
            <person name="Metzker M.L."/>
            <person name="Milosavljevic A."/>
            <person name="Miner G.R."/>
            <person name="Morgan M.B."/>
            <person name="Nazareth L.V."/>
            <person name="Scott G."/>
            <person name="Sodergren E."/>
            <person name="Song X.-Z."/>
            <person name="Steffen D."/>
            <person name="Wei S."/>
            <person name="Wheeler D.A."/>
            <person name="Wright M.W."/>
            <person name="Worley K.C."/>
            <person name="Yuan Y."/>
            <person name="Zhang Z."/>
            <person name="Adams C.Q."/>
            <person name="Ansari-Lari M.A."/>
            <person name="Ayele M."/>
            <person name="Brown M.J."/>
            <person name="Chen G."/>
            <person name="Chen Z."/>
            <person name="Clendenning J."/>
            <person name="Clerc-Blankenburg K.P."/>
            <person name="Chen R."/>
            <person name="Chen Z."/>
            <person name="Davis C."/>
            <person name="Delgado O."/>
            <person name="Dinh H.H."/>
            <person name="Dong W."/>
            <person name="Draper H."/>
            <person name="Ernst S."/>
            <person name="Fu G."/>
            <person name="Gonzalez-Garay M.L."/>
            <person name="Garcia D.K."/>
            <person name="Gillett W."/>
            <person name="Gu J."/>
            <person name="Hao B."/>
            <person name="Haugen E."/>
            <person name="Havlak P."/>
            <person name="He X."/>
            <person name="Hennig S."/>
            <person name="Hu S."/>
            <person name="Huang W."/>
            <person name="Jackson L.R."/>
            <person name="Jacob L.S."/>
            <person name="Kelly S.H."/>
            <person name="Kube M."/>
            <person name="Levy R."/>
            <person name="Li Z."/>
            <person name="Liu B."/>
            <person name="Liu J."/>
            <person name="Liu W."/>
            <person name="Lu J."/>
            <person name="Maheshwari M."/>
            <person name="Nguyen B.-V."/>
            <person name="Okwuonu G.O."/>
            <person name="Palmeiri A."/>
            <person name="Pasternak S."/>
            <person name="Perez L.M."/>
            <person name="Phelps K.A."/>
            <person name="Plopper F.J."/>
            <person name="Qiang B."/>
            <person name="Raymond C."/>
            <person name="Rodriguez R."/>
            <person name="Saenphimmachak C."/>
            <person name="Santibanez J."/>
            <person name="Shen H."/>
            <person name="Shen Y."/>
            <person name="Subramanian S."/>
            <person name="Tabor P.E."/>
            <person name="Verduzco D."/>
            <person name="Waldron L."/>
            <person name="Wang J."/>
            <person name="Wang J."/>
            <person name="Wang Q."/>
            <person name="Williams G.A."/>
            <person name="Wong G.K.-S."/>
            <person name="Yao Z."/>
            <person name="Zhang J."/>
            <person name="Zhang X."/>
            <person name="Zhao G."/>
            <person name="Zhou J."/>
            <person name="Zhou Y."/>
            <person name="Nelson D."/>
            <person name="Lehrach H."/>
            <person name="Reinhardt R."/>
            <person name="Naylor S.L."/>
            <person name="Yang H."/>
            <person name="Olson M."/>
            <person name="Weinstock G."/>
            <person name="Gibbs R.A."/>
        </authorList>
    </citation>
    <scope>NUCLEOTIDE SEQUENCE [LARGE SCALE GENOMIC DNA]</scope>
</reference>
<reference key="2">
    <citation type="submission" date="2005-09" db="EMBL/GenBank/DDBJ databases">
        <authorList>
            <person name="Mural R.J."/>
            <person name="Istrail S."/>
            <person name="Sutton G.G."/>
            <person name="Florea L."/>
            <person name="Halpern A.L."/>
            <person name="Mobarry C.M."/>
            <person name="Lippert R."/>
            <person name="Walenz B."/>
            <person name="Shatkay H."/>
            <person name="Dew I."/>
            <person name="Miller J.R."/>
            <person name="Flanigan M.J."/>
            <person name="Edwards N.J."/>
            <person name="Bolanos R."/>
            <person name="Fasulo D."/>
            <person name="Halldorsson B.V."/>
            <person name="Hannenhalli S."/>
            <person name="Turner R."/>
            <person name="Yooseph S."/>
            <person name="Lu F."/>
            <person name="Nusskern D.R."/>
            <person name="Shue B.C."/>
            <person name="Zheng X.H."/>
            <person name="Zhong F."/>
            <person name="Delcher A.L."/>
            <person name="Huson D.H."/>
            <person name="Kravitz S.A."/>
            <person name="Mouchard L."/>
            <person name="Reinert K."/>
            <person name="Remington K.A."/>
            <person name="Clark A.G."/>
            <person name="Waterman M.S."/>
            <person name="Eichler E.E."/>
            <person name="Adams M.D."/>
            <person name="Hunkapiller M.W."/>
            <person name="Myers E.W."/>
            <person name="Venter J.C."/>
        </authorList>
    </citation>
    <scope>NUCLEOTIDE SEQUENCE [LARGE SCALE GENOMIC DNA]</scope>
    <scope>VARIANT TYR-101</scope>
</reference>
<reference key="3">
    <citation type="journal article" date="2004" name="Genome Res.">
        <title>The status, quality, and expansion of the NIH full-length cDNA project: the Mammalian Gene Collection (MGC).</title>
        <authorList>
            <consortium name="The MGC Project Team"/>
        </authorList>
    </citation>
    <scope>NUCLEOTIDE SEQUENCE [LARGE SCALE MRNA]</scope>
    <scope>VARIANT TYR-101</scope>
    <source>
        <tissue>Lung</tissue>
        <tissue>Ovary</tissue>
    </source>
</reference>
<reference key="4">
    <citation type="journal article" date="2005" name="Nat. Biotechnol.">
        <title>Immunoaffinity profiling of tyrosine phosphorylation in cancer cells.</title>
        <authorList>
            <person name="Rush J."/>
            <person name="Moritz A."/>
            <person name="Lee K.A."/>
            <person name="Guo A."/>
            <person name="Goss V.L."/>
            <person name="Spek E.J."/>
            <person name="Zhang H."/>
            <person name="Zha X.-M."/>
            <person name="Polakiewicz R.D."/>
            <person name="Comb M.J."/>
        </authorList>
    </citation>
    <scope>PHOSPHORYLATION [LARGE SCALE ANALYSIS] AT TYR-39</scope>
    <scope>IDENTIFICATION BY MASS SPECTROMETRY [LARGE SCALE ANALYSIS]</scope>
</reference>
<reference key="5">
    <citation type="journal article" date="2017" name="Nucleic Acids Res.">
        <title>Methylation of human eukaryotic elongation factor alpha (eEF1A) by a member of a novel protein lysine methyltransferase family modulates mRNA translation.</title>
        <authorList>
            <person name="Jakobsson M.E."/>
            <person name="Malecki J."/>
            <person name="Nilges B.S."/>
            <person name="Moen A."/>
            <person name="Leidel S.A."/>
            <person name="Falnes P.O."/>
        </authorList>
    </citation>
    <scope>FUNCTION</scope>
    <scope>MUTAGENESIS OF ASP-88; GLU-129; LYS-130; THR-132; LEU-133 AND ASP-134</scope>
    <scope>CATALYTIC ACTIVITY</scope>
</reference>
<reference key="6">
    <citation type="journal article" date="2009" name="Proteins">
        <title>An intact SAM-dependent methyltransferase fold is encoded by the human endothelin-converting enzyme-2 gene.</title>
        <authorList>
            <person name="Tempel W."/>
            <person name="Wu H."/>
            <person name="Dombrovsky L."/>
            <person name="Zeng H."/>
            <person name="Loppnau P."/>
            <person name="Zhu H."/>
            <person name="Plotnikov A.N."/>
            <person name="Bochkarev A."/>
        </authorList>
    </citation>
    <scope>X-RAY CRYSTALLOGRAPHY (1.3 ANGSTROMS) OF 19-161 IN COMPLEX WITH S-ADENOSYL-L-HOMOCYSTEINE</scope>
</reference>
<dbReference type="EC" id="2.1.1.-" evidence="3"/>
<dbReference type="EMBL" id="AC061705">
    <property type="status" value="NOT_ANNOTATED_CDS"/>
    <property type="molecule type" value="Genomic_DNA"/>
</dbReference>
<dbReference type="EMBL" id="AC078797">
    <property type="status" value="NOT_ANNOTATED_CDS"/>
    <property type="molecule type" value="Genomic_DNA"/>
</dbReference>
<dbReference type="EMBL" id="CH471052">
    <property type="protein sequence ID" value="EAW78277.1"/>
    <property type="molecule type" value="Genomic_DNA"/>
</dbReference>
<dbReference type="EMBL" id="BC005835">
    <property type="protein sequence ID" value="AAH05835.1"/>
    <property type="molecule type" value="mRNA"/>
</dbReference>
<dbReference type="EMBL" id="BC012449">
    <property type="protein sequence ID" value="AAH12449.1"/>
    <property type="molecule type" value="mRNA"/>
</dbReference>
<dbReference type="EMBL" id="BC069005">
    <property type="protein sequence ID" value="AAH69005.1"/>
    <property type="molecule type" value="mRNA"/>
</dbReference>
<dbReference type="CCDS" id="CCDS3255.1"/>
<dbReference type="RefSeq" id="NP_115707.2">
    <molecule id="P0DPD7-4"/>
    <property type="nucleotide sequence ID" value="NM_032331.4"/>
</dbReference>
<dbReference type="PDB" id="2PXX">
    <property type="method" value="X-ray"/>
    <property type="resolution" value="1.30 A"/>
    <property type="chains" value="A=19-231"/>
</dbReference>
<dbReference type="PDBsum" id="2PXX"/>
<dbReference type="SMR" id="P0DPD7"/>
<dbReference type="FunCoup" id="P0DPD7">
    <property type="interactions" value="590"/>
</dbReference>
<dbReference type="STRING" id="9606.ENSP00000314295"/>
<dbReference type="GlyGen" id="P0DPD7">
    <property type="glycosylation" value="1 site, 1 O-linked glycan (1 site)"/>
</dbReference>
<dbReference type="iPTMnet" id="P0DPD7"/>
<dbReference type="PhosphoSitePlus" id="P0DPD7"/>
<dbReference type="jPOST" id="P0DPD7"/>
<dbReference type="MassIVE" id="P0DPD7"/>
<dbReference type="PeptideAtlas" id="P0DPD7"/>
<dbReference type="Pumba" id="P0DPD7"/>
<dbReference type="Ensembl" id="ENST00000324557.9">
    <molecule id="P0DPD7-4"/>
    <property type="protein sequence ID" value="ENSP00000314295.5"/>
    <property type="gene ID" value="ENSG00000284753.2"/>
</dbReference>
<dbReference type="GeneID" id="110599564"/>
<dbReference type="KEGG" id="hsa:110599564"/>
<dbReference type="MANE-Select" id="ENST00000324557.9">
    <property type="protein sequence ID" value="ENSP00000314295.5"/>
    <property type="RefSeq nucleotide sequence ID" value="NM_032331.4"/>
    <property type="RefSeq protein sequence ID" value="NP_115707.2"/>
</dbReference>
<dbReference type="AGR" id="HGNC:53611"/>
<dbReference type="CTD" id="110599564"/>
<dbReference type="DisGeNET" id="110599564"/>
<dbReference type="GeneCards" id="EEF1AKMT4"/>
<dbReference type="HGNC" id="HGNC:53611">
    <property type="gene designation" value="EEF1AKMT4"/>
</dbReference>
<dbReference type="HPA" id="ENSG00000284753">
    <property type="expression patterns" value="Low tissue specificity"/>
</dbReference>
<dbReference type="MIM" id="610145">
    <property type="type" value="gene"/>
</dbReference>
<dbReference type="neXtProt" id="NX_P0DPD7"/>
<dbReference type="VEuPathDB" id="HostDB:ENSG00000284753"/>
<dbReference type="GeneTree" id="ENSGT00940000164140"/>
<dbReference type="InParanoid" id="P0DPD7"/>
<dbReference type="OMA" id="HWAVMDA"/>
<dbReference type="OrthoDB" id="411785at2759"/>
<dbReference type="PAN-GO" id="P0DPD7">
    <property type="GO annotations" value="0 GO annotations based on evolutionary models"/>
</dbReference>
<dbReference type="PathwayCommons" id="P0DPD7"/>
<dbReference type="EvolutionaryTrace" id="P0DPD7"/>
<dbReference type="Pharos" id="P0DPD7">
    <property type="development level" value="Tdark"/>
</dbReference>
<dbReference type="PRO" id="PR:P0DPD7"/>
<dbReference type="Proteomes" id="UP000005640">
    <property type="component" value="Chromosome 3"/>
</dbReference>
<dbReference type="Bgee" id="ENSG00000284753">
    <property type="expression patterns" value="Expressed in left testis and 104 other cell types or tissues"/>
</dbReference>
<dbReference type="GO" id="GO:0008168">
    <property type="term" value="F:methyltransferase activity"/>
    <property type="evidence" value="ECO:0000315"/>
    <property type="project" value="UniProtKB"/>
</dbReference>
<dbReference type="GO" id="GO:0016279">
    <property type="term" value="F:protein-lysine N-methyltransferase activity"/>
    <property type="evidence" value="ECO:0000314"/>
    <property type="project" value="UniProtKB"/>
</dbReference>
<dbReference type="GO" id="GO:0032259">
    <property type="term" value="P:methylation"/>
    <property type="evidence" value="ECO:0007669"/>
    <property type="project" value="UniProtKB-KW"/>
</dbReference>
<dbReference type="CDD" id="cd02440">
    <property type="entry name" value="AdoMet_MTases"/>
    <property type="match status" value="1"/>
</dbReference>
<dbReference type="FunFam" id="3.40.50.150:FF:000111">
    <property type="entry name" value="EEF1A lysine methyltransferase 4"/>
    <property type="match status" value="1"/>
</dbReference>
<dbReference type="Gene3D" id="3.40.50.150">
    <property type="entry name" value="Vaccinia Virus protein VP39"/>
    <property type="match status" value="1"/>
</dbReference>
<dbReference type="InterPro" id="IPR051419">
    <property type="entry name" value="Lys/N-term_MeTrsfase_sf"/>
</dbReference>
<dbReference type="InterPro" id="IPR013216">
    <property type="entry name" value="Methyltransf_11"/>
</dbReference>
<dbReference type="InterPro" id="IPR029063">
    <property type="entry name" value="SAM-dependent_MTases_sf"/>
</dbReference>
<dbReference type="PANTHER" id="PTHR12176:SF80">
    <property type="entry name" value="EEF1A LYSINE METHYLTRANSFERASE 4"/>
    <property type="match status" value="1"/>
</dbReference>
<dbReference type="PANTHER" id="PTHR12176">
    <property type="entry name" value="SAM-DEPENDENT METHYLTRANSFERASE SUPERFAMILY PROTEIN"/>
    <property type="match status" value="1"/>
</dbReference>
<dbReference type="Pfam" id="PF08241">
    <property type="entry name" value="Methyltransf_11"/>
    <property type="match status" value="1"/>
</dbReference>
<dbReference type="SUPFAM" id="SSF53335">
    <property type="entry name" value="S-adenosyl-L-methionine-dependent methyltransferases"/>
    <property type="match status" value="1"/>
</dbReference>
<keyword id="KW-0002">3D-structure</keyword>
<keyword id="KW-0025">Alternative splicing</keyword>
<keyword id="KW-0489">Methyltransferase</keyword>
<keyword id="KW-0597">Phosphoprotein</keyword>
<keyword id="KW-1267">Proteomics identification</keyword>
<keyword id="KW-1185">Reference proteome</keyword>
<keyword id="KW-0949">S-adenosyl-L-methionine</keyword>
<keyword id="KW-0808">Transferase</keyword>